<name>RL7_STRZP</name>
<proteinExistence type="inferred from homology"/>
<keyword id="KW-0687">Ribonucleoprotein</keyword>
<keyword id="KW-0689">Ribosomal protein</keyword>
<feature type="chain" id="PRO_1000195821" description="Large ribosomal subunit protein bL12">
    <location>
        <begin position="1"/>
        <end position="122"/>
    </location>
</feature>
<gene>
    <name evidence="1" type="primary">rplL</name>
    <name type="ordered locus">SPP_1373</name>
</gene>
<evidence type="ECO:0000255" key="1">
    <source>
        <dbReference type="HAMAP-Rule" id="MF_00368"/>
    </source>
</evidence>
<evidence type="ECO:0000305" key="2"/>
<sequence>MALNIENIIAEIKEASILELNDLVKAIEEEFGVTAAAPVAVAAADAADAGAAKDSFDVELTSAGDKKVGVIKVVREITGLGLKEAKELVDGAPALVKEGVATAEAEEIKAKLEEAGASVTLK</sequence>
<organism>
    <name type="scientific">Streptococcus pneumoniae (strain P1031)</name>
    <dbReference type="NCBI Taxonomy" id="488223"/>
    <lineage>
        <taxon>Bacteria</taxon>
        <taxon>Bacillati</taxon>
        <taxon>Bacillota</taxon>
        <taxon>Bacilli</taxon>
        <taxon>Lactobacillales</taxon>
        <taxon>Streptococcaceae</taxon>
        <taxon>Streptococcus</taxon>
    </lineage>
</organism>
<accession>C1CL62</accession>
<dbReference type="EMBL" id="CP000920">
    <property type="protein sequence ID" value="ACO20805.1"/>
    <property type="molecule type" value="Genomic_DNA"/>
</dbReference>
<dbReference type="RefSeq" id="WP_001196960.1">
    <property type="nucleotide sequence ID" value="NC_012467.1"/>
</dbReference>
<dbReference type="SMR" id="C1CL62"/>
<dbReference type="GeneID" id="45653386"/>
<dbReference type="KEGG" id="spp:SPP_1373"/>
<dbReference type="HOGENOM" id="CLU_086499_3_2_9"/>
<dbReference type="GO" id="GO:0022625">
    <property type="term" value="C:cytosolic large ribosomal subunit"/>
    <property type="evidence" value="ECO:0007669"/>
    <property type="project" value="TreeGrafter"/>
</dbReference>
<dbReference type="GO" id="GO:0003729">
    <property type="term" value="F:mRNA binding"/>
    <property type="evidence" value="ECO:0007669"/>
    <property type="project" value="TreeGrafter"/>
</dbReference>
<dbReference type="GO" id="GO:0003735">
    <property type="term" value="F:structural constituent of ribosome"/>
    <property type="evidence" value="ECO:0007669"/>
    <property type="project" value="InterPro"/>
</dbReference>
<dbReference type="GO" id="GO:0006412">
    <property type="term" value="P:translation"/>
    <property type="evidence" value="ECO:0007669"/>
    <property type="project" value="UniProtKB-UniRule"/>
</dbReference>
<dbReference type="CDD" id="cd00387">
    <property type="entry name" value="Ribosomal_L7_L12"/>
    <property type="match status" value="1"/>
</dbReference>
<dbReference type="FunFam" id="1.20.5.710:FF:000002">
    <property type="entry name" value="50S ribosomal protein L7/L12"/>
    <property type="match status" value="1"/>
</dbReference>
<dbReference type="FunFam" id="3.30.1390.10:FF:000001">
    <property type="entry name" value="50S ribosomal protein L7/L12"/>
    <property type="match status" value="1"/>
</dbReference>
<dbReference type="Gene3D" id="3.30.1390.10">
    <property type="match status" value="1"/>
</dbReference>
<dbReference type="Gene3D" id="1.20.5.710">
    <property type="entry name" value="Single helix bin"/>
    <property type="match status" value="1"/>
</dbReference>
<dbReference type="HAMAP" id="MF_00368">
    <property type="entry name" value="Ribosomal_bL12"/>
    <property type="match status" value="1"/>
</dbReference>
<dbReference type="InterPro" id="IPR000206">
    <property type="entry name" value="Ribosomal_bL12"/>
</dbReference>
<dbReference type="InterPro" id="IPR013823">
    <property type="entry name" value="Ribosomal_bL12_C"/>
</dbReference>
<dbReference type="InterPro" id="IPR014719">
    <property type="entry name" value="Ribosomal_bL12_C/ClpS-like"/>
</dbReference>
<dbReference type="InterPro" id="IPR008932">
    <property type="entry name" value="Ribosomal_bL12_oligo"/>
</dbReference>
<dbReference type="InterPro" id="IPR036235">
    <property type="entry name" value="Ribosomal_bL12_oligo_N_sf"/>
</dbReference>
<dbReference type="NCBIfam" id="TIGR00855">
    <property type="entry name" value="L12"/>
    <property type="match status" value="1"/>
</dbReference>
<dbReference type="PANTHER" id="PTHR45987">
    <property type="entry name" value="39S RIBOSOMAL PROTEIN L12"/>
    <property type="match status" value="1"/>
</dbReference>
<dbReference type="PANTHER" id="PTHR45987:SF4">
    <property type="entry name" value="LARGE RIBOSOMAL SUBUNIT PROTEIN BL12M"/>
    <property type="match status" value="1"/>
</dbReference>
<dbReference type="Pfam" id="PF00542">
    <property type="entry name" value="Ribosomal_L12"/>
    <property type="match status" value="1"/>
</dbReference>
<dbReference type="Pfam" id="PF16320">
    <property type="entry name" value="Ribosomal_L12_N"/>
    <property type="match status" value="1"/>
</dbReference>
<dbReference type="SUPFAM" id="SSF54736">
    <property type="entry name" value="ClpS-like"/>
    <property type="match status" value="1"/>
</dbReference>
<dbReference type="SUPFAM" id="SSF48300">
    <property type="entry name" value="Ribosomal protein L7/12, oligomerisation (N-terminal) domain"/>
    <property type="match status" value="1"/>
</dbReference>
<reference key="1">
    <citation type="journal article" date="2010" name="Genome Biol.">
        <title>Structure and dynamics of the pan-genome of Streptococcus pneumoniae and closely related species.</title>
        <authorList>
            <person name="Donati C."/>
            <person name="Hiller N.L."/>
            <person name="Tettelin H."/>
            <person name="Muzzi A."/>
            <person name="Croucher N.J."/>
            <person name="Angiuoli S.V."/>
            <person name="Oggioni M."/>
            <person name="Dunning Hotopp J.C."/>
            <person name="Hu F.Z."/>
            <person name="Riley D.R."/>
            <person name="Covacci A."/>
            <person name="Mitchell T.J."/>
            <person name="Bentley S.D."/>
            <person name="Kilian M."/>
            <person name="Ehrlich G.D."/>
            <person name="Rappuoli R."/>
            <person name="Moxon E.R."/>
            <person name="Masignani V."/>
        </authorList>
    </citation>
    <scope>NUCLEOTIDE SEQUENCE [LARGE SCALE GENOMIC DNA]</scope>
    <source>
        <strain>P1031</strain>
    </source>
</reference>
<comment type="function">
    <text evidence="1">Forms part of the ribosomal stalk which helps the ribosome interact with GTP-bound translation factors. Is thus essential for accurate translation.</text>
</comment>
<comment type="subunit">
    <text evidence="1">Homodimer. Part of the ribosomal stalk of the 50S ribosomal subunit. Forms a multimeric L10(L12)X complex, where L10 forms an elongated spine to which 2 to 4 L12 dimers bind in a sequential fashion. Binds GTP-bound translation factors.</text>
</comment>
<comment type="similarity">
    <text evidence="1">Belongs to the bacterial ribosomal protein bL12 family.</text>
</comment>
<protein>
    <recommendedName>
        <fullName evidence="1">Large ribosomal subunit protein bL12</fullName>
    </recommendedName>
    <alternativeName>
        <fullName evidence="2">50S ribosomal protein L7/L12</fullName>
    </alternativeName>
</protein>